<sequence>LVALALSQTAYSQITNGTTGNPIICLGHHAVENGTSVKTLTDNHVEVVSAKELVETKHTDELCPSPLKLVDGQDCDLINGALGSPGCDRLQDTTWDVFIERPTAVDTCYPFDVPDYQSLRSILASSGSLEFIAEQFTWNGVKVDGSSSACLRGGRNSFFSRLNWLTKATNGNYGPINVTKENTGSYVRLYLWGVHHPSSDNEQTDLYKVATGRVTVSTRSDQISIVPNIGSRPRVRNQSGRISIYWTLVNPGDSIIFNSIGNLIAPRGHYKISKSTKSTVLKSDKRIGSCTSPCLTDKGSIQSDKPFQNVSRIAIGNCPKYVKQGSLMLATGMRNIPGKQAKGLFGAIAGFIENGWQGLIDGWYGFRHQNAEGTGTAADLKSTQAAIDQINGKLNRLIEKTNEKYHQIEKEFEQVEGRIQDLEKYVEDTKIDLWSYNAELLVALENQHTIDVTDSEMNKLFERVRRQLRENAEDQGNGCFEIFHQCDNNCIESIRNGTYDHNIYRDEAINNRIKINPVTLTMGYKDIILWISFSMSCFVFVALILGFVLWACQNGNIRCQICI</sequence>
<reference key="1">
    <citation type="journal article" date="1990" name="Virology">
        <title>Molecular characterization of a new hemagglutinin, subtype H14, of influenza A virus.</title>
        <authorList>
            <person name="Kawaoka Y."/>
            <person name="Yamnikova S."/>
            <person name="Chambers T.M."/>
            <person name="Lvov D.K."/>
            <person name="Webster R.G."/>
        </authorList>
    </citation>
    <scope>NUCLEOTIDE SEQUENCE [GENOMIC RNA]</scope>
</reference>
<organismHost>
    <name type="scientific">Aves</name>
    <dbReference type="NCBI Taxonomy" id="8782"/>
</organismHost>
<comment type="function">
    <text evidence="1">Binds to sialic acid-containing receptors on the cell surface, bringing about the attachment of the virus particle to the cell. This attachment induces virion internalization either through clathrin-dependent endocytosis or through clathrin- and caveolin-independent pathway. Plays a major role in the determination of host range restriction and virulence. Class I viral fusion protein. Responsible for penetration of the virus into the cell cytoplasm by mediating the fusion of the membrane of the endocytosed virus particle with the endosomal membrane. Low pH in endosomes induces an irreversible conformational change in HA2, releasing the fusion hydrophobic peptide. Several trimers are required to form a competent fusion pore.</text>
</comment>
<comment type="subunit">
    <text evidence="1">Homotrimer of disulfide-linked HA1-HA2.</text>
</comment>
<comment type="subcellular location">
    <subcellularLocation>
        <location evidence="1">Virion membrane</location>
        <topology evidence="1">Single-pass type I membrane protein</topology>
    </subcellularLocation>
    <subcellularLocation>
        <location evidence="1">Host apical cell membrane</location>
        <topology evidence="1">Single-pass type I membrane protein</topology>
    </subcellularLocation>
    <text evidence="1">Targeted to the apical plasma membrane in epithelial polarized cells through a signal present in the transmembrane domain. Associated with glycosphingolipid- and cholesterol-enriched detergent-resistant lipid rafts.</text>
</comment>
<comment type="PTM">
    <text evidence="1">Palmitoylated.</text>
</comment>
<comment type="PTM">
    <text evidence="1">In natural infection, inactive HA is matured into HA1 and HA2 outside the cell by one or more trypsin-like, arginine-specific endoprotease secreted by the bronchial epithelial cells. One identified protease that may be involved in this process is secreted in lungs by club cells.</text>
</comment>
<comment type="miscellaneous">
    <text>Major glycoprotein, comprises over 80% of the envelope proteins present in virus particle.</text>
</comment>
<comment type="miscellaneous">
    <text>The extent of infection into host organism is determined by HA. Influenza viruses bud from the apical surface of polarized epithelial cells (e.g. bronchial epithelial cells) into lumen of lungs and are therefore usually pneumotropic. The reason is that HA is cleaved by tryptase clara which is restricted to lungs. However, HAs of H5 and H7 pantropic avian viruses subtypes can be cleaved by furin and subtilisin-type enzymes, allowing the virus to grow in other organs than lungs.</text>
</comment>
<comment type="miscellaneous">
    <text>The influenza A genome consist of 8 RNA segments. Genetic variation of hemagglutinin and/or neuraminidase genes results in the emergence of new influenza strains. The mechanism of variation can be the result of point mutations or the result of genetic reassortment between segments of two different strains.</text>
</comment>
<comment type="similarity">
    <text evidence="1">Belongs to the influenza viruses hemagglutinin family.</text>
</comment>
<gene>
    <name evidence="1" type="primary">HA</name>
</gene>
<evidence type="ECO:0000255" key="1">
    <source>
        <dbReference type="HAMAP-Rule" id="MF_04072"/>
    </source>
</evidence>
<evidence type="ECO:0007829" key="2">
    <source>
        <dbReference type="PDB" id="3EYK"/>
    </source>
</evidence>
<name>HEMA_I82A0</name>
<dbReference type="EMBL" id="M35996">
    <property type="status" value="NOT_ANNOTATED_CDS"/>
    <property type="molecule type" value="Genomic_RNA"/>
</dbReference>
<dbReference type="PDB" id="3EYJ">
    <property type="method" value="X-ray"/>
    <property type="resolution" value="2.60 A"/>
    <property type="chains" value="A=20-342, B=343-514"/>
</dbReference>
<dbReference type="PDB" id="3EYK">
    <property type="method" value="X-ray"/>
    <property type="resolution" value="2.50 A"/>
    <property type="chains" value="A=20-342, B=343-514"/>
</dbReference>
<dbReference type="PDBsum" id="3EYJ"/>
<dbReference type="PDBsum" id="3EYK"/>
<dbReference type="SMR" id="P26137"/>
<dbReference type="DrugBank" id="DB07726">
    <property type="generic name" value="t-Butylhydroquinone"/>
</dbReference>
<dbReference type="GlyCosmos" id="P26137">
    <property type="glycosylation" value="6 sites, No reported glycans"/>
</dbReference>
<dbReference type="EvolutionaryTrace" id="P26137"/>
<dbReference type="GO" id="GO:0020002">
    <property type="term" value="C:host cell plasma membrane"/>
    <property type="evidence" value="ECO:0007669"/>
    <property type="project" value="UniProtKB-SubCell"/>
</dbReference>
<dbReference type="GO" id="GO:0016020">
    <property type="term" value="C:membrane"/>
    <property type="evidence" value="ECO:0007669"/>
    <property type="project" value="UniProtKB-KW"/>
</dbReference>
<dbReference type="GO" id="GO:0019031">
    <property type="term" value="C:viral envelope"/>
    <property type="evidence" value="ECO:0007669"/>
    <property type="project" value="UniProtKB-KW"/>
</dbReference>
<dbReference type="GO" id="GO:0055036">
    <property type="term" value="C:virion membrane"/>
    <property type="evidence" value="ECO:0007669"/>
    <property type="project" value="UniProtKB-SubCell"/>
</dbReference>
<dbReference type="GO" id="GO:0046789">
    <property type="term" value="F:host cell surface receptor binding"/>
    <property type="evidence" value="ECO:0007669"/>
    <property type="project" value="InterPro"/>
</dbReference>
<dbReference type="GO" id="GO:0075512">
    <property type="term" value="P:clathrin-dependent endocytosis of virus by host cell"/>
    <property type="evidence" value="ECO:0007669"/>
    <property type="project" value="UniProtKB-KW"/>
</dbReference>
<dbReference type="GO" id="GO:0039654">
    <property type="term" value="P:fusion of virus membrane with host endosome membrane"/>
    <property type="evidence" value="ECO:0007669"/>
    <property type="project" value="UniProtKB-KW"/>
</dbReference>
<dbReference type="GO" id="GO:0019064">
    <property type="term" value="P:fusion of virus membrane with host plasma membrane"/>
    <property type="evidence" value="ECO:0007669"/>
    <property type="project" value="InterPro"/>
</dbReference>
<dbReference type="GO" id="GO:0019062">
    <property type="term" value="P:virion attachment to host cell"/>
    <property type="evidence" value="ECO:0007669"/>
    <property type="project" value="UniProtKB-KW"/>
</dbReference>
<dbReference type="Gene3D" id="3.90.20.10">
    <property type="match status" value="1"/>
</dbReference>
<dbReference type="Gene3D" id="3.90.209.20">
    <property type="match status" value="1"/>
</dbReference>
<dbReference type="HAMAP" id="MF_04072">
    <property type="entry name" value="INFV_HEMA"/>
    <property type="match status" value="1"/>
</dbReference>
<dbReference type="InterPro" id="IPR008980">
    <property type="entry name" value="Capsid_hemagglutn"/>
</dbReference>
<dbReference type="InterPro" id="IPR013828">
    <property type="entry name" value="Hemagglutn_HA1_a/b_dom_sf"/>
</dbReference>
<dbReference type="InterPro" id="IPR000149">
    <property type="entry name" value="Hemagglutn_influenz_A"/>
</dbReference>
<dbReference type="InterPro" id="IPR001364">
    <property type="entry name" value="Hemagglutn_influenz_A/B"/>
</dbReference>
<dbReference type="Pfam" id="PF00509">
    <property type="entry name" value="Hemagglutinin"/>
    <property type="match status" value="1"/>
</dbReference>
<dbReference type="PRINTS" id="PR00330">
    <property type="entry name" value="HEMAGGLUTN1"/>
</dbReference>
<dbReference type="PRINTS" id="PR00329">
    <property type="entry name" value="HEMAGGLUTN12"/>
</dbReference>
<dbReference type="SUPFAM" id="SSF58064">
    <property type="entry name" value="Influenza hemagglutinin (stalk)"/>
    <property type="match status" value="1"/>
</dbReference>
<dbReference type="SUPFAM" id="SSF49818">
    <property type="entry name" value="Viral protein domain"/>
    <property type="match status" value="1"/>
</dbReference>
<protein>
    <recommendedName>
        <fullName evidence="1">Hemagglutinin</fullName>
    </recommendedName>
    <component>
        <recommendedName>
            <fullName evidence="1">Hemagglutinin HA1 chain</fullName>
        </recommendedName>
    </component>
    <component>
        <recommendedName>
            <fullName evidence="1">Hemagglutinin HA2 chain</fullName>
        </recommendedName>
    </component>
</protein>
<proteinExistence type="evidence at protein level"/>
<accession>P26137</accession>
<organism>
    <name type="scientific">Influenza A virus (strain A/Mallard/Astrakhan/244/1982 H14N6)</name>
    <name type="common">Influenza A virus (strain A/Mallard/Gurjev/244/1982 H14N6)</name>
    <dbReference type="NCBI Taxonomy" id="11433"/>
    <lineage>
        <taxon>Viruses</taxon>
        <taxon>Riboviria</taxon>
        <taxon>Orthornavirae</taxon>
        <taxon>Negarnaviricota</taxon>
        <taxon>Polyploviricotina</taxon>
        <taxon>Insthoviricetes</taxon>
        <taxon>Articulavirales</taxon>
        <taxon>Orthomyxoviridae</taxon>
        <taxon>Alphainfluenzavirus</taxon>
        <taxon>Alphainfluenzavirus influenzae</taxon>
        <taxon>Influenza A virus</taxon>
    </lineage>
</organism>
<keyword id="KW-0002">3D-structure</keyword>
<keyword id="KW-1167">Clathrin- and caveolin-independent endocytosis of virus by host</keyword>
<keyword id="KW-1165">Clathrin-mediated endocytosis of virus by host</keyword>
<keyword id="KW-1015">Disulfide bond</keyword>
<keyword id="KW-1170">Fusion of virus membrane with host endosomal membrane</keyword>
<keyword id="KW-1168">Fusion of virus membrane with host membrane</keyword>
<keyword id="KW-0325">Glycoprotein</keyword>
<keyword id="KW-0348">Hemagglutinin</keyword>
<keyword id="KW-1032">Host cell membrane</keyword>
<keyword id="KW-1043">Host membrane</keyword>
<keyword id="KW-0945">Host-virus interaction</keyword>
<keyword id="KW-0449">Lipoprotein</keyword>
<keyword id="KW-0472">Membrane</keyword>
<keyword id="KW-0564">Palmitate</keyword>
<keyword id="KW-0812">Transmembrane</keyword>
<keyword id="KW-1133">Transmembrane helix</keyword>
<keyword id="KW-1161">Viral attachment to host cell</keyword>
<keyword id="KW-0261">Viral envelope protein</keyword>
<keyword id="KW-1162">Viral penetration into host cytoplasm</keyword>
<keyword id="KW-0946">Virion</keyword>
<keyword id="KW-1164">Virus endocytosis by host</keyword>
<keyword id="KW-1160">Virus entry into host cell</keyword>
<feature type="chain" id="PRO_0000440845" description="Hemagglutinin HA1 chain" evidence="1">
    <location>
        <begin position="1"/>
        <end position="342"/>
    </location>
</feature>
<feature type="chain" id="PRO_0000039019" description="Hemagglutinin HA2 chain" evidence="1">
    <location>
        <begin position="343"/>
        <end position="563"/>
    </location>
</feature>
<feature type="topological domain" description="Extracellular" evidence="1">
    <location>
        <begin position="1"/>
        <end position="526"/>
    </location>
</feature>
<feature type="transmembrane region" description="Helical" evidence="1">
    <location>
        <begin position="527"/>
        <end position="547"/>
    </location>
</feature>
<feature type="topological domain" description="Cytoplasmic" evidence="1">
    <location>
        <begin position="548"/>
        <end position="563"/>
    </location>
</feature>
<feature type="lipid moiety-binding region" description="S-palmitoyl cysteine; by host" evidence="1">
    <location>
        <position position="552"/>
    </location>
</feature>
<feature type="lipid moiety-binding region" description="S-palmitoyl cysteine; by host" evidence="1">
    <location>
        <position position="559"/>
    </location>
</feature>
<feature type="lipid moiety-binding region" description="S-palmitoyl cysteine; by host" evidence="1">
    <location>
        <position position="562"/>
    </location>
</feature>
<feature type="glycosylation site" description="N-linked (GlcNAc...) asparagine; by host" evidence="1">
    <location>
        <position position="16"/>
    </location>
</feature>
<feature type="glycosylation site" description="N-linked (GlcNAc...) asparagine; by host" evidence="1">
    <location>
        <position position="33"/>
    </location>
</feature>
<feature type="glycosylation site" description="N-linked (GlcNAc...) asparagine; by host" evidence="1">
    <location>
        <position position="177"/>
    </location>
</feature>
<feature type="glycosylation site" description="N-linked (GlcNAc...) asparagine; by host" evidence="1">
    <location>
        <position position="237"/>
    </location>
</feature>
<feature type="glycosylation site" description="N-linked (GlcNAc...) asparagine; by host" evidence="1">
    <location>
        <position position="309"/>
    </location>
</feature>
<feature type="glycosylation site" description="N-linked (GlcNAc...) asparagine; by host" evidence="1">
    <location>
        <position position="496"/>
    </location>
</feature>
<feature type="disulfide bond" description="Interchain (between HA1 and HA2 chains)" evidence="1">
    <location>
        <begin position="25"/>
        <end position="479"/>
    </location>
</feature>
<feature type="disulfide bond" evidence="1">
    <location>
        <begin position="63"/>
        <end position="290"/>
    </location>
</feature>
<feature type="disulfide bond" evidence="1">
    <location>
        <begin position="75"/>
        <end position="87"/>
    </location>
</feature>
<feature type="disulfide bond" evidence="1">
    <location>
        <begin position="108"/>
        <end position="150"/>
    </location>
</feature>
<feature type="disulfide bond" evidence="1">
    <location>
        <begin position="294"/>
        <end position="318"/>
    </location>
</feature>
<feature type="disulfide bond" evidence="1">
    <location>
        <begin position="486"/>
        <end position="490"/>
    </location>
</feature>
<feature type="non-terminal residue">
    <location>
        <position position="1"/>
    </location>
</feature>
<feature type="strand" evidence="2">
    <location>
        <begin position="23"/>
        <end position="29"/>
    </location>
</feature>
<feature type="strand" evidence="2">
    <location>
        <begin position="35"/>
        <end position="37"/>
    </location>
</feature>
<feature type="strand" evidence="2">
    <location>
        <begin position="45"/>
        <end position="48"/>
    </location>
</feature>
<feature type="strand" evidence="2">
    <location>
        <begin position="50"/>
        <end position="52"/>
    </location>
</feature>
<feature type="strand" evidence="2">
    <location>
        <begin position="60"/>
        <end position="62"/>
    </location>
</feature>
<feature type="strand" evidence="2">
    <location>
        <begin position="65"/>
        <end position="67"/>
    </location>
</feature>
<feature type="strand" evidence="2">
    <location>
        <begin position="69"/>
        <end position="71"/>
    </location>
</feature>
<feature type="helix" evidence="2">
    <location>
        <begin position="77"/>
        <end position="82"/>
    </location>
</feature>
<feature type="helix" evidence="2">
    <location>
        <begin position="85"/>
        <end position="90"/>
    </location>
</feature>
<feature type="strand" evidence="2">
    <location>
        <begin position="96"/>
        <end position="100"/>
    </location>
</feature>
<feature type="helix" evidence="2">
    <location>
        <begin position="116"/>
        <end position="126"/>
    </location>
</feature>
<feature type="strand" evidence="2">
    <location>
        <begin position="131"/>
        <end position="133"/>
    </location>
</feature>
<feature type="strand" evidence="2">
    <location>
        <begin position="147"/>
        <end position="152"/>
    </location>
</feature>
<feature type="strand" evidence="2">
    <location>
        <begin position="155"/>
        <end position="157"/>
    </location>
</feature>
<feature type="strand" evidence="2">
    <location>
        <begin position="162"/>
        <end position="164"/>
    </location>
</feature>
<feature type="strand" evidence="2">
    <location>
        <begin position="169"/>
        <end position="171"/>
    </location>
</feature>
<feature type="strand" evidence="2">
    <location>
        <begin position="176"/>
        <end position="181"/>
    </location>
</feature>
<feature type="strand" evidence="2">
    <location>
        <begin position="184"/>
        <end position="196"/>
    </location>
</feature>
<feature type="helix" evidence="2">
    <location>
        <begin position="200"/>
        <end position="207"/>
    </location>
</feature>
<feature type="strand" evidence="2">
    <location>
        <begin position="208"/>
        <end position="211"/>
    </location>
</feature>
<feature type="strand" evidence="2">
    <location>
        <begin position="213"/>
        <end position="217"/>
    </location>
</feature>
<feature type="strand" evidence="2">
    <location>
        <begin position="222"/>
        <end position="225"/>
    </location>
</feature>
<feature type="strand" evidence="2">
    <location>
        <begin position="241"/>
        <end position="249"/>
    </location>
</feature>
<feature type="strand" evidence="2">
    <location>
        <begin position="254"/>
        <end position="261"/>
    </location>
</feature>
<feature type="strand" evidence="2">
    <location>
        <begin position="263"/>
        <end position="272"/>
    </location>
</feature>
<feature type="strand" evidence="2">
    <location>
        <begin position="279"/>
        <end position="282"/>
    </location>
</feature>
<feature type="strand" evidence="2">
    <location>
        <begin position="293"/>
        <end position="296"/>
    </location>
</feature>
<feature type="strand" evidence="2">
    <location>
        <begin position="306"/>
        <end position="308"/>
    </location>
</feature>
<feature type="strand" evidence="2">
    <location>
        <begin position="314"/>
        <end position="317"/>
    </location>
</feature>
<feature type="strand" evidence="2">
    <location>
        <begin position="328"/>
        <end position="330"/>
    </location>
</feature>
<feature type="helix" evidence="2">
    <location>
        <begin position="347"/>
        <end position="351"/>
    </location>
</feature>
<feature type="strand" evidence="2">
    <location>
        <begin position="363"/>
        <end position="370"/>
    </location>
</feature>
<feature type="strand" evidence="2">
    <location>
        <begin position="373"/>
        <end position="378"/>
    </location>
</feature>
<feature type="helix" evidence="2">
    <location>
        <begin position="380"/>
        <end position="396"/>
    </location>
</feature>
<feature type="helix" evidence="2">
    <location>
        <begin position="418"/>
        <end position="468"/>
    </location>
</feature>
<feature type="helix" evidence="2">
    <location>
        <begin position="469"/>
        <end position="471"/>
    </location>
</feature>
<feature type="strand" evidence="2">
    <location>
        <begin position="472"/>
        <end position="474"/>
    </location>
</feature>
<feature type="strand" evidence="2">
    <location>
        <begin position="476"/>
        <end position="484"/>
    </location>
</feature>
<feature type="helix" evidence="2">
    <location>
        <begin position="488"/>
        <end position="495"/>
    </location>
</feature>
<feature type="helix" evidence="2">
    <location>
        <begin position="501"/>
        <end position="503"/>
    </location>
</feature>
<feature type="helix" evidence="2">
    <location>
        <begin position="505"/>
        <end position="512"/>
    </location>
</feature>